<organism>
    <name type="scientific">Thermothelomyces thermophilus (strain ATCC 42464 / BCRC 31852 / DSM 1799)</name>
    <name type="common">Sporotrichum thermophile</name>
    <dbReference type="NCBI Taxonomy" id="573729"/>
    <lineage>
        <taxon>Eukaryota</taxon>
        <taxon>Fungi</taxon>
        <taxon>Dikarya</taxon>
        <taxon>Ascomycota</taxon>
        <taxon>Pezizomycotina</taxon>
        <taxon>Sordariomycetes</taxon>
        <taxon>Sordariomycetidae</taxon>
        <taxon>Sordariales</taxon>
        <taxon>Chaetomiaceae</taxon>
        <taxon>Thermothelomyces</taxon>
    </lineage>
</organism>
<comment type="function">
    <text evidence="1">E3 ubiquitin-protein ligase component of a retrotranslocation channel required for peroxisome organization by mediating export of the PEX5 receptor from peroxisomes to the cytosol, thereby promoting PEX5 recycling (By similarity). The retrotranslocation channel is composed of PEX2, PEX10 and PEX12; each subunit contributing transmembrane segments that coassemble into an open channel that specifically allows the passage of PEX5 through the peroxisomal membrane (By similarity). PEX2 also regulates peroxisome organization by acting as a E3 ubiquitin-protein ligase (By similarity). PEX2 ubiquitinates PEX5 during its passage through the retrotranslocation channel: catalyzes monoubiquitination of PEX5 at 'Cys-6', a modification that acts as a signal for PEX5 extraction into the cytosol (By similarity).</text>
</comment>
<comment type="catalytic activity">
    <reaction evidence="1">
        <text>[E2 ubiquitin-conjugating enzyme]-S-ubiquitinyl-L-cysteine + [acceptor protein]-L-cysteine = [E2 ubiquitin-conjugating enzyme]-L-cysteine + [acceptor protein]-S-ubiquitinyl-L-cysteine.</text>
        <dbReference type="EC" id="2.3.2.36"/>
    </reaction>
</comment>
<comment type="pathway">
    <text evidence="1">Protein modification; protein ubiquitination.</text>
</comment>
<comment type="subunit">
    <text evidence="4">Component of the PEX2-PEX10-PEX12 retrotranslocation channel, composed of PEX2, PEX10 and PEX12.</text>
</comment>
<comment type="subcellular location">
    <subcellularLocation>
        <location evidence="1">Peroxisome membrane</location>
        <topology evidence="4">Multi-pass membrane protein</topology>
    </subcellularLocation>
</comment>
<comment type="domain">
    <text evidence="4">The three subunits of the retrotranslocation channel (PEX2, PEX10 and PEX12) coassemble in the membrane into a channel with an open 10 Angstrom pore (PubMed:35768507). The RING-type zinc-fingers that catalyze PEX5 receptor ubiquitination are positioned above the pore on the cytosolic side of the complex (PubMed:35768507).</text>
</comment>
<comment type="similarity">
    <text evidence="6">Belongs to the pex2/pex10/pex12 family.</text>
</comment>
<keyword id="KW-0002">3D-structure</keyword>
<keyword id="KW-0472">Membrane</keyword>
<keyword id="KW-0479">Metal-binding</keyword>
<keyword id="KW-0576">Peroxisome</keyword>
<keyword id="KW-0653">Protein transport</keyword>
<keyword id="KW-1185">Reference proteome</keyword>
<keyword id="KW-0808">Transferase</keyword>
<keyword id="KW-0812">Transmembrane</keyword>
<keyword id="KW-1133">Transmembrane helix</keyword>
<keyword id="KW-0813">Transport</keyword>
<keyword id="KW-0833">Ubl conjugation pathway</keyword>
<keyword id="KW-0862">Zinc</keyword>
<keyword id="KW-0863">Zinc-finger</keyword>
<sequence length="591" mass="64346">MSDSDPKPTAAKGAAPTSIPNSTRNPNPTPPNPNPNPNPISTPAPTPTATPSPPIASSSNNGNNSTRSTNIDTNNNTNNAFFQAQQRIAARREAREAAAAARQATQQSASRLRARIAASQSPLLRRLGTSTLSLWDTLTSREGTRPAFRVGQVDAELLDEELVELLRGQVREALRYVGGGGGGGGGGGGGGVGSGVAQDWEAEISLALRAVLFKLTVWDHDATYGAALQNLKYTDARRDGPALAPPSRWQKALYGLVTVGGRYLWAKWEDWLLEQDDGFEGPSPRVKRLARWTSALSTLHASAALVSFLVFLLHGRYRTLLDRLLRMRLAPPTSQVSREVSFEYLNRQLVWHAFTEFLLFVLPLVGINRWRRWLARTWRRTKKIMTADADGGAGDKKGEYSFLPERTCAICYRDQNSASSETELLAAASGGVVGSAQTDITNPYEAIPCGCTYCFVCLATRIEREEGEGWPCLRCGELIKECKPWNGDVLEEPQVKSSPATTKTVVFADDVKAPSDHEEEENEEEEEQQGELGENEGESSQVLVEADPDGGLNDLRPETPSVSSDQADDSRGSESEDYEAEEDGLDEDPES</sequence>
<evidence type="ECO:0000250" key="1">
    <source>
        <dbReference type="UniProtKB" id="P32800"/>
    </source>
</evidence>
<evidence type="ECO:0000255" key="2">
    <source>
        <dbReference type="PROSITE-ProRule" id="PRU00175"/>
    </source>
</evidence>
<evidence type="ECO:0000256" key="3">
    <source>
        <dbReference type="SAM" id="MobiDB-lite"/>
    </source>
</evidence>
<evidence type="ECO:0000269" key="4">
    <source>
    </source>
</evidence>
<evidence type="ECO:0000303" key="5">
    <source>
    </source>
</evidence>
<evidence type="ECO:0000305" key="6"/>
<evidence type="ECO:0000305" key="7">
    <source>
    </source>
</evidence>
<evidence type="ECO:0000312" key="8">
    <source>
        <dbReference type="EMBL" id="AEO53321.1"/>
    </source>
</evidence>
<evidence type="ECO:0007744" key="9">
    <source>
        <dbReference type="PDB" id="7T92"/>
    </source>
</evidence>
<evidence type="ECO:0007829" key="10">
    <source>
        <dbReference type="PDB" id="7T92"/>
    </source>
</evidence>
<proteinExistence type="evidence at protein level"/>
<reference key="1">
    <citation type="journal article" date="2011" name="Nat. Biotechnol.">
        <title>Comparative genomic analysis of the thermophilic biomass-degrading fungi Myceliophthora thermophila and Thielavia terrestris.</title>
        <authorList>
            <person name="Berka R.M."/>
            <person name="Grigoriev I.V."/>
            <person name="Otillar R."/>
            <person name="Salamov A."/>
            <person name="Grimwood J."/>
            <person name="Reid I."/>
            <person name="Ishmael N."/>
            <person name="John T."/>
            <person name="Darmond C."/>
            <person name="Moisan M.-C."/>
            <person name="Henrissat B."/>
            <person name="Coutinho P.M."/>
            <person name="Lombard V."/>
            <person name="Natvig D.O."/>
            <person name="Lindquist E."/>
            <person name="Schmutz J."/>
            <person name="Lucas S."/>
            <person name="Harris P."/>
            <person name="Powlowski J."/>
            <person name="Bellemare A."/>
            <person name="Taylor D."/>
            <person name="Butler G."/>
            <person name="de Vries R.P."/>
            <person name="Allijn I.E."/>
            <person name="van den Brink J."/>
            <person name="Ushinsky S."/>
            <person name="Storms R."/>
            <person name="Powell A.J."/>
            <person name="Paulsen I.T."/>
            <person name="Elbourne L.D.H."/>
            <person name="Baker S.E."/>
            <person name="Magnuson J."/>
            <person name="LaBoissiere S."/>
            <person name="Clutterbuck A.J."/>
            <person name="Martinez D."/>
            <person name="Wogulis M."/>
            <person name="de Leon A.L."/>
            <person name="Rey M.W."/>
            <person name="Tsang A."/>
        </authorList>
    </citation>
    <scope>NUCLEOTIDE SEQUENCE [LARGE SCALE GENOMIC DNA]</scope>
    <source>
        <strain>ATCC 42464 / BCRC 31852 / DSM 1799</strain>
    </source>
</reference>
<reference key="2">
    <citation type="journal article" date="2022" name="Nature">
        <title>A peroxisomal ubiquitin ligase complex forms a retrotranslocation channel.</title>
        <authorList>
            <person name="Feng P."/>
            <person name="Wu X."/>
            <person name="Erramilli S.K."/>
            <person name="Paulo J.A."/>
            <person name="Knejski P."/>
            <person name="Gygi S.P."/>
            <person name="Kossiakoff A.A."/>
            <person name="Rapoport T.A."/>
        </authorList>
    </citation>
    <scope>STRUCTURE BY ELECTRON MICROSCOPY (3.1 ANGSTROMS) OF 144-490 IN COMPLEX WITH ZINC; PEX10 AND PEX12</scope>
    <scope>TOPOLOGY</scope>
    <scope>IDENTIFICATION IN THE PEX2-PEX10-PEX12 RETROTRANSLOCATION CHANNEL</scope>
    <scope>DOMAIN</scope>
</reference>
<feature type="chain" id="PRO_0000456985" description="Peroxisome assembly protein 2">
    <location>
        <begin position="1"/>
        <end position="591"/>
    </location>
</feature>
<feature type="topological domain" description="Peroxisomal matrix" evidence="7">
    <location>
        <begin position="1"/>
        <end position="148"/>
    </location>
</feature>
<feature type="transmembrane region" description="Helical; Name=TM1" evidence="4 9">
    <location>
        <begin position="149"/>
        <end position="175"/>
    </location>
</feature>
<feature type="topological domain" description="Cytoplasmic" evidence="7">
    <location>
        <begin position="176"/>
        <end position="196"/>
    </location>
</feature>
<feature type="transmembrane region" description="Helical; Name=TM2" evidence="4 9">
    <location>
        <begin position="197"/>
        <end position="222"/>
    </location>
</feature>
<feature type="topological domain" description="Peroxisomal matrix" evidence="7">
    <location>
        <begin position="223"/>
        <end position="246"/>
    </location>
</feature>
<feature type="transmembrane region" description="Helical; Name=TM3" evidence="4 9">
    <location>
        <begin position="247"/>
        <end position="273"/>
    </location>
</feature>
<feature type="topological domain" description="Cytoplasmic" evidence="7">
    <location>
        <begin position="274"/>
        <end position="283"/>
    </location>
</feature>
<feature type="transmembrane region" description="Helical; Name=TM4" evidence="4 9">
    <location>
        <begin position="284"/>
        <end position="314"/>
    </location>
</feature>
<feature type="topological domain" description="Peroxisomal matrix" evidence="7">
    <location>
        <begin position="315"/>
        <end position="341"/>
    </location>
</feature>
<feature type="transmembrane region" description="Helical; Name=TM5" evidence="4 9">
    <location>
        <begin position="342"/>
        <end position="365"/>
    </location>
</feature>
<feature type="topological domain" description="Cytoplasmic" evidence="7">
    <location>
        <begin position="366"/>
        <end position="591"/>
    </location>
</feature>
<feature type="zinc finger region" description="RING-type; atypical" evidence="2">
    <location>
        <begin position="408"/>
        <end position="475"/>
    </location>
</feature>
<feature type="region of interest" description="Disordered" evidence="3">
    <location>
        <begin position="1"/>
        <end position="78"/>
    </location>
</feature>
<feature type="region of interest" description="Disordered" evidence="3">
    <location>
        <begin position="512"/>
        <end position="591"/>
    </location>
</feature>
<feature type="compositionally biased region" description="Low complexity" evidence="3">
    <location>
        <begin position="7"/>
        <end position="26"/>
    </location>
</feature>
<feature type="compositionally biased region" description="Pro residues" evidence="3">
    <location>
        <begin position="27"/>
        <end position="54"/>
    </location>
</feature>
<feature type="compositionally biased region" description="Low complexity" evidence="3">
    <location>
        <begin position="55"/>
        <end position="78"/>
    </location>
</feature>
<feature type="compositionally biased region" description="Acidic residues" evidence="3">
    <location>
        <begin position="517"/>
        <end position="537"/>
    </location>
</feature>
<feature type="compositionally biased region" description="Acidic residues" evidence="3">
    <location>
        <begin position="575"/>
        <end position="591"/>
    </location>
</feature>
<feature type="binding site" evidence="4 9">
    <location>
        <position position="408"/>
    </location>
    <ligand>
        <name>Zn(2+)</name>
        <dbReference type="ChEBI" id="CHEBI:29105"/>
        <label>1</label>
    </ligand>
</feature>
<feature type="binding site" evidence="4 9">
    <location>
        <position position="411"/>
    </location>
    <ligand>
        <name>Zn(2+)</name>
        <dbReference type="ChEBI" id="CHEBI:29105"/>
        <label>1</label>
    </ligand>
</feature>
<feature type="binding site" evidence="4 9">
    <location>
        <position position="449"/>
    </location>
    <ligand>
        <name>Zn(2+)</name>
        <dbReference type="ChEBI" id="CHEBI:29105"/>
        <label>2</label>
    </ligand>
</feature>
<feature type="binding site" evidence="4 9">
    <location>
        <position position="451"/>
    </location>
    <ligand>
        <name>Zn(2+)</name>
        <dbReference type="ChEBI" id="CHEBI:29105"/>
        <label>2</label>
    </ligand>
</feature>
<feature type="binding site" evidence="4 9">
    <location>
        <position position="454"/>
    </location>
    <ligand>
        <name>Zn(2+)</name>
        <dbReference type="ChEBI" id="CHEBI:29105"/>
        <label>1</label>
    </ligand>
</feature>
<feature type="binding site" evidence="4 9">
    <location>
        <position position="457"/>
    </location>
    <ligand>
        <name>Zn(2+)</name>
        <dbReference type="ChEBI" id="CHEBI:29105"/>
        <label>1</label>
    </ligand>
</feature>
<feature type="binding site" evidence="4 9">
    <location>
        <position position="472"/>
    </location>
    <ligand>
        <name>Zn(2+)</name>
        <dbReference type="ChEBI" id="CHEBI:29105"/>
        <label>2</label>
    </ligand>
</feature>
<feature type="binding site" evidence="4 9">
    <location>
        <position position="475"/>
    </location>
    <ligand>
        <name>Zn(2+)</name>
        <dbReference type="ChEBI" id="CHEBI:29105"/>
        <label>2</label>
    </ligand>
</feature>
<feature type="helix" evidence="10">
    <location>
        <begin position="150"/>
        <end position="173"/>
    </location>
</feature>
<feature type="helix" evidence="10">
    <location>
        <begin position="195"/>
        <end position="199"/>
    </location>
</feature>
<feature type="helix" evidence="10">
    <location>
        <begin position="201"/>
        <end position="215"/>
    </location>
</feature>
<feature type="helix" evidence="10">
    <location>
        <begin position="217"/>
        <end position="220"/>
    </location>
</feature>
<feature type="turn" evidence="10">
    <location>
        <begin position="224"/>
        <end position="230"/>
    </location>
</feature>
<feature type="strand" evidence="10">
    <location>
        <begin position="232"/>
        <end position="235"/>
    </location>
</feature>
<feature type="helix" evidence="10">
    <location>
        <begin position="248"/>
        <end position="258"/>
    </location>
</feature>
<feature type="helix" evidence="10">
    <location>
        <begin position="260"/>
        <end position="275"/>
    </location>
</feature>
<feature type="helix" evidence="10">
    <location>
        <begin position="284"/>
        <end position="314"/>
    </location>
</feature>
<feature type="helix" evidence="10">
    <location>
        <begin position="320"/>
        <end position="325"/>
    </location>
</feature>
<feature type="strand" evidence="10">
    <location>
        <begin position="327"/>
        <end position="330"/>
    </location>
</feature>
<feature type="helix" evidence="10">
    <location>
        <begin position="343"/>
        <end position="365"/>
    </location>
</feature>
<feature type="helix" evidence="10">
    <location>
        <begin position="367"/>
        <end position="378"/>
    </location>
</feature>
<feature type="turn" evidence="10">
    <location>
        <begin position="399"/>
        <end position="402"/>
    </location>
</feature>
<feature type="helix" evidence="10">
    <location>
        <begin position="409"/>
        <end position="415"/>
    </location>
</feature>
<feature type="turn" evidence="10">
    <location>
        <begin position="436"/>
        <end position="438"/>
    </location>
</feature>
<feature type="strand" evidence="10">
    <location>
        <begin position="441"/>
        <end position="446"/>
    </location>
</feature>
<feature type="turn" evidence="10">
    <location>
        <begin position="447"/>
        <end position="449"/>
    </location>
</feature>
<feature type="strand" evidence="10">
    <location>
        <begin position="452"/>
        <end position="454"/>
    </location>
</feature>
<feature type="helix" evidence="10">
    <location>
        <begin position="455"/>
        <end position="464"/>
    </location>
</feature>
<feature type="turn" evidence="10">
    <location>
        <begin position="465"/>
        <end position="467"/>
    </location>
</feature>
<feature type="strand" evidence="10">
    <location>
        <begin position="473"/>
        <end position="475"/>
    </location>
</feature>
<feature type="strand" evidence="10">
    <location>
        <begin position="478"/>
        <end position="480"/>
    </location>
</feature>
<feature type="strand" evidence="10">
    <location>
        <begin position="482"/>
        <end position="484"/>
    </location>
</feature>
<name>PEX2_THET4</name>
<gene>
    <name evidence="5" type="primary">PEX2</name>
    <name evidence="8" type="ORF">MYCTH_2294472</name>
</gene>
<protein>
    <recommendedName>
        <fullName evidence="6">Peroxisome assembly protein 2</fullName>
        <ecNumber evidence="1">2.3.2.36</ecNumber>
    </recommendedName>
    <alternativeName>
        <fullName evidence="6">Peroxin-2</fullName>
    </alternativeName>
</protein>
<dbReference type="EC" id="2.3.2.36" evidence="1"/>
<dbReference type="EMBL" id="CP003002">
    <property type="protein sequence ID" value="AEO53321.1"/>
    <property type="molecule type" value="Genomic_DNA"/>
</dbReference>
<dbReference type="RefSeq" id="XP_003658566.1">
    <property type="nucleotide sequence ID" value="XM_003658518.1"/>
</dbReference>
<dbReference type="PDB" id="7T92">
    <property type="method" value="EM"/>
    <property type="resolution" value="3.10 A"/>
    <property type="chains" value="A=144-490"/>
</dbReference>
<dbReference type="PDBsum" id="7T92"/>
<dbReference type="EMDB" id="EMD-25750"/>
<dbReference type="SMR" id="G2Q1C9"/>
<dbReference type="STRING" id="573729.G2Q1C9"/>
<dbReference type="GeneID" id="11511700"/>
<dbReference type="KEGG" id="mtm:MYCTH_2294472"/>
<dbReference type="VEuPathDB" id="FungiDB:MYCTH_2294472"/>
<dbReference type="eggNOG" id="KOG2879">
    <property type="taxonomic scope" value="Eukaryota"/>
</dbReference>
<dbReference type="HOGENOM" id="CLU_024591_2_0_1"/>
<dbReference type="InParanoid" id="G2Q1C9"/>
<dbReference type="OMA" id="CQPWNGD"/>
<dbReference type="OrthoDB" id="1701437at2759"/>
<dbReference type="UniPathway" id="UPA00143"/>
<dbReference type="Proteomes" id="UP000007322">
    <property type="component" value="Chromosome 1"/>
</dbReference>
<dbReference type="GO" id="GO:0005778">
    <property type="term" value="C:peroxisomal membrane"/>
    <property type="evidence" value="ECO:0007669"/>
    <property type="project" value="UniProtKB-SubCell"/>
</dbReference>
<dbReference type="GO" id="GO:0016740">
    <property type="term" value="F:transferase activity"/>
    <property type="evidence" value="ECO:0007669"/>
    <property type="project" value="UniProtKB-KW"/>
</dbReference>
<dbReference type="GO" id="GO:0008270">
    <property type="term" value="F:zinc ion binding"/>
    <property type="evidence" value="ECO:0007669"/>
    <property type="project" value="UniProtKB-KW"/>
</dbReference>
<dbReference type="GO" id="GO:0016562">
    <property type="term" value="P:protein import into peroxisome matrix, receptor recycling"/>
    <property type="evidence" value="ECO:0007669"/>
    <property type="project" value="UniProtKB-ARBA"/>
</dbReference>
<dbReference type="GO" id="GO:0016567">
    <property type="term" value="P:protein ubiquitination"/>
    <property type="evidence" value="ECO:0007669"/>
    <property type="project" value="UniProtKB-UniPathway"/>
</dbReference>
<dbReference type="InterPro" id="IPR025654">
    <property type="entry name" value="PEX2/10"/>
</dbReference>
<dbReference type="InterPro" id="IPR006845">
    <property type="entry name" value="Pex_N"/>
</dbReference>
<dbReference type="PANTHER" id="PTHR23350">
    <property type="entry name" value="PEROXISOME ASSEMBLY PROTEIN 10"/>
    <property type="match status" value="1"/>
</dbReference>
<dbReference type="PANTHER" id="PTHR23350:SF4">
    <property type="entry name" value="PEROXISOME BIOGENESIS FACTOR 2"/>
    <property type="match status" value="1"/>
</dbReference>
<dbReference type="Pfam" id="PF04757">
    <property type="entry name" value="Pex2_Pex12"/>
    <property type="match status" value="1"/>
</dbReference>
<accession>G2Q1C9</accession>